<reference key="1">
    <citation type="journal article" date="2002" name="Proc. Natl. Acad. Sci. U.S.A.">
        <title>Extensive mosaic structure revealed by the complete genome sequence of uropathogenic Escherichia coli.</title>
        <authorList>
            <person name="Welch R.A."/>
            <person name="Burland V."/>
            <person name="Plunkett G. III"/>
            <person name="Redford P."/>
            <person name="Roesch P."/>
            <person name="Rasko D."/>
            <person name="Buckles E.L."/>
            <person name="Liou S.-R."/>
            <person name="Boutin A."/>
            <person name="Hackett J."/>
            <person name="Stroud D."/>
            <person name="Mayhew G.F."/>
            <person name="Rose D.J."/>
            <person name="Zhou S."/>
            <person name="Schwartz D.C."/>
            <person name="Perna N.T."/>
            <person name="Mobley H.L.T."/>
            <person name="Donnenberg M.S."/>
            <person name="Blattner F.R."/>
        </authorList>
    </citation>
    <scope>NUCLEOTIDE SEQUENCE [LARGE SCALE GENOMIC DNA]</scope>
    <source>
        <strain>CFT073 / ATCC 700928 / UPEC</strain>
    </source>
</reference>
<organism>
    <name type="scientific">Escherichia coli O6:H1 (strain CFT073 / ATCC 700928 / UPEC)</name>
    <dbReference type="NCBI Taxonomy" id="199310"/>
    <lineage>
        <taxon>Bacteria</taxon>
        <taxon>Pseudomonadati</taxon>
        <taxon>Pseudomonadota</taxon>
        <taxon>Gammaproteobacteria</taxon>
        <taxon>Enterobacterales</taxon>
        <taxon>Enterobacteriaceae</taxon>
        <taxon>Escherichia</taxon>
    </lineage>
</organism>
<keyword id="KW-1185">Reference proteome</keyword>
<keyword id="KW-0687">Ribonucleoprotein</keyword>
<keyword id="KW-0689">Ribosomal protein</keyword>
<dbReference type="EMBL" id="AE014075">
    <property type="protein sequence ID" value="AAN83371.1"/>
    <property type="molecule type" value="Genomic_DNA"/>
</dbReference>
<dbReference type="RefSeq" id="WP_000028878.1">
    <property type="nucleotide sequence ID" value="NZ_CP051263.1"/>
</dbReference>
<dbReference type="SMR" id="P0A7K3"/>
<dbReference type="STRING" id="199310.c4943"/>
<dbReference type="GeneID" id="86944525"/>
<dbReference type="KEGG" id="ecc:c4943"/>
<dbReference type="eggNOG" id="COG0222">
    <property type="taxonomic scope" value="Bacteria"/>
</dbReference>
<dbReference type="HOGENOM" id="CLU_086499_3_2_6"/>
<dbReference type="BioCyc" id="ECOL199310:C4943-MONOMER"/>
<dbReference type="Proteomes" id="UP000001410">
    <property type="component" value="Chromosome"/>
</dbReference>
<dbReference type="GO" id="GO:0022625">
    <property type="term" value="C:cytosolic large ribosomal subunit"/>
    <property type="evidence" value="ECO:0007669"/>
    <property type="project" value="TreeGrafter"/>
</dbReference>
<dbReference type="GO" id="GO:0003729">
    <property type="term" value="F:mRNA binding"/>
    <property type="evidence" value="ECO:0007669"/>
    <property type="project" value="TreeGrafter"/>
</dbReference>
<dbReference type="GO" id="GO:0003735">
    <property type="term" value="F:structural constituent of ribosome"/>
    <property type="evidence" value="ECO:0007669"/>
    <property type="project" value="InterPro"/>
</dbReference>
<dbReference type="GO" id="GO:0006412">
    <property type="term" value="P:translation"/>
    <property type="evidence" value="ECO:0007669"/>
    <property type="project" value="UniProtKB-UniRule"/>
</dbReference>
<dbReference type="CDD" id="cd00387">
    <property type="entry name" value="Ribosomal_L7_L12"/>
    <property type="match status" value="1"/>
</dbReference>
<dbReference type="FunFam" id="1.20.5.710:FF:000001">
    <property type="entry name" value="50S ribosomal protein L7/L12"/>
    <property type="match status" value="1"/>
</dbReference>
<dbReference type="FunFam" id="3.30.1390.10:FF:000001">
    <property type="entry name" value="50S ribosomal protein L7/L12"/>
    <property type="match status" value="1"/>
</dbReference>
<dbReference type="Gene3D" id="3.30.1390.10">
    <property type="match status" value="1"/>
</dbReference>
<dbReference type="Gene3D" id="1.20.5.710">
    <property type="entry name" value="Single helix bin"/>
    <property type="match status" value="1"/>
</dbReference>
<dbReference type="HAMAP" id="MF_00368">
    <property type="entry name" value="Ribosomal_bL12"/>
    <property type="match status" value="1"/>
</dbReference>
<dbReference type="InterPro" id="IPR000206">
    <property type="entry name" value="Ribosomal_bL12"/>
</dbReference>
<dbReference type="InterPro" id="IPR013823">
    <property type="entry name" value="Ribosomal_bL12_C"/>
</dbReference>
<dbReference type="InterPro" id="IPR014719">
    <property type="entry name" value="Ribosomal_bL12_C/ClpS-like"/>
</dbReference>
<dbReference type="InterPro" id="IPR008932">
    <property type="entry name" value="Ribosomal_bL12_oligo"/>
</dbReference>
<dbReference type="InterPro" id="IPR036235">
    <property type="entry name" value="Ribosomal_bL12_oligo_N_sf"/>
</dbReference>
<dbReference type="NCBIfam" id="TIGR00855">
    <property type="entry name" value="L12"/>
    <property type="match status" value="1"/>
</dbReference>
<dbReference type="PANTHER" id="PTHR45987">
    <property type="entry name" value="39S RIBOSOMAL PROTEIN L12"/>
    <property type="match status" value="1"/>
</dbReference>
<dbReference type="PANTHER" id="PTHR45987:SF4">
    <property type="entry name" value="LARGE RIBOSOMAL SUBUNIT PROTEIN BL12M"/>
    <property type="match status" value="1"/>
</dbReference>
<dbReference type="Pfam" id="PF00542">
    <property type="entry name" value="Ribosomal_L12"/>
    <property type="match status" value="1"/>
</dbReference>
<dbReference type="Pfam" id="PF16320">
    <property type="entry name" value="Ribosomal_L12_N"/>
    <property type="match status" value="1"/>
</dbReference>
<dbReference type="SUPFAM" id="SSF54736">
    <property type="entry name" value="ClpS-like"/>
    <property type="match status" value="1"/>
</dbReference>
<dbReference type="SUPFAM" id="SSF48300">
    <property type="entry name" value="Ribosomal protein L7/12, oligomerisation (N-terminal) domain"/>
    <property type="match status" value="1"/>
</dbReference>
<proteinExistence type="inferred from homology"/>
<gene>
    <name evidence="2" type="primary">rplL</name>
    <name type="ordered locus">c4943</name>
</gene>
<sequence length="121" mass="12295">MSITKDQIIEAVAAMSVMDVVELISAMEEKFGVSAAAAVAVAAGPVEAAEEKTEFDVILKAAGANKVAVIKAVRGATGLGLKEAKDLVESAPAALKEGVSKDDAEALKKALEEAGAEVEVK</sequence>
<comment type="function">
    <text evidence="2">Forms part of the ribosomal stalk which helps the ribosome interact with GTP-bound translation factors. Is thus essential for accurate translation.</text>
</comment>
<comment type="subunit">
    <text evidence="2">Homodimer. Part of the ribosomal stalk of the 50S ribosomal subunit. Forms a multimeric L10(L12)X complex, where L10 forms an elongated spine to which 2 to 4 L12 dimers bind in a sequential fashion. Binds GTP-bound translation factors.</text>
</comment>
<comment type="similarity">
    <text evidence="2">Belongs to the bacterial ribosomal protein bL12 family.</text>
</comment>
<name>RL7_ECOL6</name>
<evidence type="ECO:0000250" key="1"/>
<evidence type="ECO:0000255" key="2">
    <source>
        <dbReference type="HAMAP-Rule" id="MF_00368"/>
    </source>
</evidence>
<evidence type="ECO:0000305" key="3"/>
<accession>P0A7K3</accession>
<accession>P02392</accession>
<protein>
    <recommendedName>
        <fullName evidence="2">Large ribosomal subunit protein bL12</fullName>
    </recommendedName>
    <alternativeName>
        <fullName evidence="3">50S ribosomal protein L7/L12</fullName>
    </alternativeName>
    <alternativeName>
        <fullName>L8</fullName>
    </alternativeName>
</protein>
<feature type="initiator methionine" description="Removed" evidence="1">
    <location>
        <position position="1"/>
    </location>
</feature>
<feature type="chain" id="PRO_0000157530" description="Large ribosomal subunit protein bL12">
    <location>
        <begin position="2"/>
        <end position="121"/>
    </location>
</feature>